<gene>
    <name evidence="1" type="primary">plsX</name>
</gene>
<name>PLSX_MORMI</name>
<sequence>MPNLTIALDAMGGDFGPHVTIPAAINILKKYKYLSIYLVGNEAEINSLLQNTSTSIKSRFTIIPSLDDIPMDLAPALALRNFKQSSMRMALNLVREGKAQACVSAGNTGALMVLSRHLLKVLPFVDRPALVSTLPSMTTQPVYMLDLGVNVSCDADALLQFALMGSALAEHVGNIPIPRVALLNVGQEDIKGNDLVKHAAQLLSKNPNLNYIGFIEGNDIFSGKADVIVCDGFTGNVALKTSEGVVDLVISQLTSVSNNNIFTKLLSLLVKPLIMSSLKRLKPDQYNGATLLGLPGIVIKSHGNAKQVAFEFAIEQAVKEVESGLVNKISASLDIID</sequence>
<accession>Q9RA35</accession>
<dbReference type="EC" id="2.3.1.274" evidence="1"/>
<dbReference type="EMBL" id="AB021978">
    <property type="protein sequence ID" value="BAA85254.1"/>
    <property type="status" value="ALT_INIT"/>
    <property type="molecule type" value="Genomic_DNA"/>
</dbReference>
<dbReference type="PIR" id="T44432">
    <property type="entry name" value="T44432"/>
</dbReference>
<dbReference type="SMR" id="Q9RA35"/>
<dbReference type="UniPathway" id="UPA00085"/>
<dbReference type="GO" id="GO:0005737">
    <property type="term" value="C:cytoplasm"/>
    <property type="evidence" value="ECO:0007669"/>
    <property type="project" value="UniProtKB-SubCell"/>
</dbReference>
<dbReference type="GO" id="GO:0043811">
    <property type="term" value="F:phosphate:acyl-[acyl carrier protein] acyltransferase activity"/>
    <property type="evidence" value="ECO:0007669"/>
    <property type="project" value="UniProtKB-UniRule"/>
</dbReference>
<dbReference type="GO" id="GO:0006633">
    <property type="term" value="P:fatty acid biosynthetic process"/>
    <property type="evidence" value="ECO:0007669"/>
    <property type="project" value="UniProtKB-UniRule"/>
</dbReference>
<dbReference type="GO" id="GO:0008654">
    <property type="term" value="P:phospholipid biosynthetic process"/>
    <property type="evidence" value="ECO:0007669"/>
    <property type="project" value="UniProtKB-KW"/>
</dbReference>
<dbReference type="Gene3D" id="3.40.718.10">
    <property type="entry name" value="Isopropylmalate Dehydrogenase"/>
    <property type="match status" value="1"/>
</dbReference>
<dbReference type="HAMAP" id="MF_00019">
    <property type="entry name" value="PlsX"/>
    <property type="match status" value="1"/>
</dbReference>
<dbReference type="InterPro" id="IPR003664">
    <property type="entry name" value="FA_synthesis"/>
</dbReference>
<dbReference type="InterPro" id="IPR012281">
    <property type="entry name" value="Phospholipid_synth_PlsX-like"/>
</dbReference>
<dbReference type="NCBIfam" id="TIGR00182">
    <property type="entry name" value="plsX"/>
    <property type="match status" value="1"/>
</dbReference>
<dbReference type="PANTHER" id="PTHR30100">
    <property type="entry name" value="FATTY ACID/PHOSPHOLIPID SYNTHESIS PROTEIN PLSX"/>
    <property type="match status" value="1"/>
</dbReference>
<dbReference type="PANTHER" id="PTHR30100:SF1">
    <property type="entry name" value="PHOSPHATE ACYLTRANSFERASE"/>
    <property type="match status" value="1"/>
</dbReference>
<dbReference type="Pfam" id="PF02504">
    <property type="entry name" value="FA_synthesis"/>
    <property type="match status" value="1"/>
</dbReference>
<dbReference type="PIRSF" id="PIRSF002465">
    <property type="entry name" value="Phsphlp_syn_PlsX"/>
    <property type="match status" value="1"/>
</dbReference>
<dbReference type="SUPFAM" id="SSF53659">
    <property type="entry name" value="Isocitrate/Isopropylmalate dehydrogenase-like"/>
    <property type="match status" value="1"/>
</dbReference>
<protein>
    <recommendedName>
        <fullName evidence="1">Phosphate acyltransferase</fullName>
        <ecNumber evidence="1">2.3.1.274</ecNumber>
    </recommendedName>
    <alternativeName>
        <fullName evidence="1">Acyl-ACP phosphotransacylase</fullName>
    </alternativeName>
    <alternativeName>
        <fullName evidence="1">Acyl-[acyl-carrier-protein]--phosphate acyltransferase</fullName>
    </alternativeName>
    <alternativeName>
        <fullName evidence="1">Phosphate-acyl-ACP acyltransferase</fullName>
    </alternativeName>
</protein>
<proteinExistence type="inferred from homology"/>
<evidence type="ECO:0000255" key="1">
    <source>
        <dbReference type="HAMAP-Rule" id="MF_00019"/>
    </source>
</evidence>
<evidence type="ECO:0000305" key="2"/>
<reference key="1">
    <citation type="journal article" date="1999" name="Biotechnol. Lett.">
        <title>Cloning and sequencing of clustered genes involved in fatty acid biosynthesis from the docosahexaenoic acid-producing bacterium, Vibrio marinus strain MP-1.</title>
        <authorList>
            <person name="Morita N."/>
            <person name="Ueno A."/>
            <person name="Tanaka M."/>
            <person name="Ohgiya S."/>
            <person name="Hoshino T."/>
            <person name="Kawasaki K."/>
            <person name="Yumoto I."/>
            <person name="Ishizaki K."/>
            <person name="Okuyama H."/>
        </authorList>
    </citation>
    <scope>NUCLEOTIDE SEQUENCE [GENOMIC DNA]</scope>
    <source>
        <strain>ATCC 15381 / BCRC 15891 / CIP 102861 / NCIMB 1144 / MP-1</strain>
    </source>
</reference>
<organism>
    <name type="scientific">Moritella marina</name>
    <name type="common">Vibrio marinus</name>
    <dbReference type="NCBI Taxonomy" id="90736"/>
    <lineage>
        <taxon>Bacteria</taxon>
        <taxon>Pseudomonadati</taxon>
        <taxon>Pseudomonadota</taxon>
        <taxon>Gammaproteobacteria</taxon>
        <taxon>Alteromonadales</taxon>
        <taxon>Moritellaceae</taxon>
        <taxon>Moritella</taxon>
    </lineage>
</organism>
<feature type="chain" id="PRO_0000189963" description="Phosphate acyltransferase">
    <location>
        <begin position="1"/>
        <end position="337"/>
    </location>
</feature>
<comment type="function">
    <text evidence="1">Catalyzes the reversible formation of acyl-phosphate (acyl-PO(4)) from acyl-[acyl-carrier-protein] (acyl-ACP). This enzyme utilizes acyl-ACP as fatty acyl donor, but not acyl-CoA.</text>
</comment>
<comment type="catalytic activity">
    <reaction evidence="1">
        <text>a fatty acyl-[ACP] + phosphate = an acyl phosphate + holo-[ACP]</text>
        <dbReference type="Rhea" id="RHEA:42292"/>
        <dbReference type="Rhea" id="RHEA-COMP:9685"/>
        <dbReference type="Rhea" id="RHEA-COMP:14125"/>
        <dbReference type="ChEBI" id="CHEBI:43474"/>
        <dbReference type="ChEBI" id="CHEBI:59918"/>
        <dbReference type="ChEBI" id="CHEBI:64479"/>
        <dbReference type="ChEBI" id="CHEBI:138651"/>
        <dbReference type="EC" id="2.3.1.274"/>
    </reaction>
</comment>
<comment type="pathway">
    <text evidence="1">Lipid metabolism; phospholipid metabolism.</text>
</comment>
<comment type="subunit">
    <text evidence="1">Homodimer. Probably interacts with PlsY.</text>
</comment>
<comment type="subcellular location">
    <subcellularLocation>
        <location evidence="1">Cytoplasm</location>
    </subcellularLocation>
    <text evidence="1">Associated with the membrane possibly through PlsY.</text>
</comment>
<comment type="similarity">
    <text evidence="1">Belongs to the PlsX family.</text>
</comment>
<comment type="sequence caution" evidence="2">
    <conflict type="erroneous initiation">
        <sequence resource="EMBL-CDS" id="BAA85254"/>
    </conflict>
</comment>
<keyword id="KW-0963">Cytoplasm</keyword>
<keyword id="KW-0444">Lipid biosynthesis</keyword>
<keyword id="KW-0443">Lipid metabolism</keyword>
<keyword id="KW-0594">Phospholipid biosynthesis</keyword>
<keyword id="KW-1208">Phospholipid metabolism</keyword>
<keyword id="KW-0808">Transferase</keyword>